<organism>
    <name type="scientific">Sarcophaga peregrina</name>
    <name type="common">Flesh fly</name>
    <name type="synonym">Boettcherisca peregrina</name>
    <dbReference type="NCBI Taxonomy" id="7386"/>
    <lineage>
        <taxon>Eukaryota</taxon>
        <taxon>Metazoa</taxon>
        <taxon>Ecdysozoa</taxon>
        <taxon>Arthropoda</taxon>
        <taxon>Hexapoda</taxon>
        <taxon>Insecta</taxon>
        <taxon>Pterygota</taxon>
        <taxon>Neoptera</taxon>
        <taxon>Endopterygota</taxon>
        <taxon>Diptera</taxon>
        <taxon>Brachycera</taxon>
        <taxon>Muscomorpha</taxon>
        <taxon>Oestroidea</taxon>
        <taxon>Sarcophagidae</taxon>
        <taxon>Sarcophaga</taxon>
        <taxon>Boettcherisca</taxon>
    </lineage>
</organism>
<dbReference type="EMBL" id="D13797">
    <property type="protein sequence ID" value="BAA02954.1"/>
    <property type="molecule type" value="mRNA"/>
</dbReference>
<dbReference type="PIR" id="A45969">
    <property type="entry name" value="A45969"/>
</dbReference>
<dbReference type="GO" id="GO:0050832">
    <property type="term" value="P:defense response to fungus"/>
    <property type="evidence" value="ECO:0007669"/>
    <property type="project" value="UniProtKB-KW"/>
</dbReference>
<dbReference type="GO" id="GO:0031640">
    <property type="term" value="P:killing of cells of another organism"/>
    <property type="evidence" value="ECO:0007669"/>
    <property type="project" value="UniProtKB-KW"/>
</dbReference>
<comment type="function">
    <text>This protein inhibits the growth of a variety of fungal species. The antifungal activity of this protein is enhanced by the presence of sarcotoxin IA.</text>
</comment>
<comment type="subunit">
    <text>Homodimer.</text>
</comment>
<comment type="tissue specificity">
    <text>Hemolymph.</text>
</comment>
<comment type="PTM">
    <text>The N-terminus is blocked.</text>
</comment>
<evidence type="ECO:0000255" key="1"/>
<evidence type="ECO:0000256" key="2">
    <source>
        <dbReference type="SAM" id="MobiDB-lite"/>
    </source>
</evidence>
<accession>Q08617</accession>
<sequence length="85" mass="9018">MVKLFVIVILALIAVAFGQHGHGGQDQHGYGHGQQAVYGKGHEGHGVNNLGQDGHGQHGYAHGHSDQHGHGGQHGQHDGYKNRGY</sequence>
<feature type="signal peptide" evidence="1">
    <location>
        <begin position="1"/>
        <end position="18"/>
    </location>
</feature>
<feature type="chain" id="PRO_0000020738" description="Antifungal protein">
    <location>
        <begin position="19"/>
        <end position="85"/>
    </location>
</feature>
<feature type="repeat" description="1">
    <location>
        <begin position="19"/>
        <end position="25"/>
    </location>
</feature>
<feature type="repeat" description="2">
    <location>
        <begin position="67"/>
        <end position="73"/>
    </location>
</feature>
<feature type="region of interest" description="2 X 7 AA repeats of Q-H-G-H-G-G-Q">
    <location>
        <begin position="19"/>
        <end position="73"/>
    </location>
</feature>
<feature type="region of interest" description="Disordered" evidence="2">
    <location>
        <begin position="22"/>
        <end position="85"/>
    </location>
</feature>
<feature type="compositionally biased region" description="Gly residues" evidence="2">
    <location>
        <begin position="22"/>
        <end position="32"/>
    </location>
</feature>
<feature type="compositionally biased region" description="Basic and acidic residues" evidence="2">
    <location>
        <begin position="63"/>
        <end position="85"/>
    </location>
</feature>
<protein>
    <recommendedName>
        <fullName>Antifungal protein</fullName>
        <shortName>AFP</shortName>
    </recommendedName>
</protein>
<name>ANTF_SARPE</name>
<reference key="1">
    <citation type="journal article" date="1993" name="J. Biol. Chem.">
        <title>Purification, characterization, and cDNA cloning of an antifungal protein from the hemolymph of Sarcophaga peregrina (flesh fly) larvae.</title>
        <authorList>
            <person name="Iijima R."/>
            <person name="Kurata S."/>
            <person name="Natori S."/>
        </authorList>
    </citation>
    <scope>NUCLEOTIDE SEQUENCE [MRNA]</scope>
    <scope>PROTEIN SEQUENCE OF 20-54</scope>
    <source>
        <tissue>Fat body</tissue>
    </source>
</reference>
<proteinExistence type="evidence at protein level"/>
<keyword id="KW-0929">Antimicrobial</keyword>
<keyword id="KW-0903">Direct protein sequencing</keyword>
<keyword id="KW-0295">Fungicide</keyword>
<keyword id="KW-0677">Repeat</keyword>
<keyword id="KW-0732">Signal</keyword>